<name>SAX1_CHICK</name>
<dbReference type="EMBL" id="M23065">
    <property type="protein sequence ID" value="AAA48821.1"/>
    <property type="molecule type" value="Genomic_DNA"/>
</dbReference>
<dbReference type="PIR" id="JU0069">
    <property type="entry name" value="JU0069"/>
</dbReference>
<dbReference type="SMR" id="P19601"/>
<dbReference type="FunCoup" id="P19601">
    <property type="interactions" value="205"/>
</dbReference>
<dbReference type="STRING" id="9031.ENSGALP00000073987"/>
<dbReference type="VEuPathDB" id="HostDB:geneid_100857765"/>
<dbReference type="InParanoid" id="P19601"/>
<dbReference type="Proteomes" id="UP000000539">
    <property type="component" value="Unassembled WGS sequence"/>
</dbReference>
<dbReference type="GO" id="GO:0005634">
    <property type="term" value="C:nucleus"/>
    <property type="evidence" value="ECO:0000318"/>
    <property type="project" value="GO_Central"/>
</dbReference>
<dbReference type="GO" id="GO:0000981">
    <property type="term" value="F:DNA-binding transcription factor activity, RNA polymerase II-specific"/>
    <property type="evidence" value="ECO:0000318"/>
    <property type="project" value="GO_Central"/>
</dbReference>
<dbReference type="GO" id="GO:0000978">
    <property type="term" value="F:RNA polymerase II cis-regulatory region sequence-specific DNA binding"/>
    <property type="evidence" value="ECO:0000318"/>
    <property type="project" value="GO_Central"/>
</dbReference>
<dbReference type="GO" id="GO:0030154">
    <property type="term" value="P:cell differentiation"/>
    <property type="evidence" value="ECO:0000318"/>
    <property type="project" value="GO_Central"/>
</dbReference>
<dbReference type="GO" id="GO:0006357">
    <property type="term" value="P:regulation of transcription by RNA polymerase II"/>
    <property type="evidence" value="ECO:0000318"/>
    <property type="project" value="GO_Central"/>
</dbReference>
<dbReference type="CDD" id="cd00086">
    <property type="entry name" value="homeodomain"/>
    <property type="match status" value="1"/>
</dbReference>
<dbReference type="FunFam" id="1.10.10.60:FF:000315">
    <property type="entry name" value="NK1 homeobox 2"/>
    <property type="match status" value="1"/>
</dbReference>
<dbReference type="Gene3D" id="1.10.10.60">
    <property type="entry name" value="Homeodomain-like"/>
    <property type="match status" value="1"/>
</dbReference>
<dbReference type="InterPro" id="IPR001356">
    <property type="entry name" value="HD"/>
</dbReference>
<dbReference type="InterPro" id="IPR020479">
    <property type="entry name" value="HD_metazoa"/>
</dbReference>
<dbReference type="InterPro" id="IPR017970">
    <property type="entry name" value="Homeobox_CS"/>
</dbReference>
<dbReference type="InterPro" id="IPR050394">
    <property type="entry name" value="Homeobox_NK-like"/>
</dbReference>
<dbReference type="InterPro" id="IPR009057">
    <property type="entry name" value="Homeodomain-like_sf"/>
</dbReference>
<dbReference type="PANTHER" id="PTHR24340">
    <property type="entry name" value="HOMEOBOX PROTEIN NKX"/>
    <property type="match status" value="1"/>
</dbReference>
<dbReference type="PANTHER" id="PTHR24340:SF17">
    <property type="entry name" value="NK1 TRANSCRIPTION FACTOR-RELATED PROTEIN 2"/>
    <property type="match status" value="1"/>
</dbReference>
<dbReference type="Pfam" id="PF00046">
    <property type="entry name" value="Homeodomain"/>
    <property type="match status" value="1"/>
</dbReference>
<dbReference type="PRINTS" id="PR00024">
    <property type="entry name" value="HOMEOBOX"/>
</dbReference>
<dbReference type="SMART" id="SM00389">
    <property type="entry name" value="HOX"/>
    <property type="match status" value="1"/>
</dbReference>
<dbReference type="SUPFAM" id="SSF46689">
    <property type="entry name" value="Homeodomain-like"/>
    <property type="match status" value="1"/>
</dbReference>
<dbReference type="PROSITE" id="PS00027">
    <property type="entry name" value="HOMEOBOX_1"/>
    <property type="match status" value="1"/>
</dbReference>
<dbReference type="PROSITE" id="PS50071">
    <property type="entry name" value="HOMEOBOX_2"/>
    <property type="match status" value="1"/>
</dbReference>
<comment type="subcellular location">
    <subcellularLocation>
        <location evidence="3">Nucleus</location>
    </subcellularLocation>
</comment>
<comment type="tissue specificity">
    <text>Transiently expressed in the birth zone of the whole spinal cord regardless of the axial level.</text>
</comment>
<comment type="similarity">
    <text evidence="3">Belongs to the NK-1 homeobox family.</text>
</comment>
<feature type="chain" id="PRO_0000049289" description="Homeobox protein SAX-1">
    <location>
        <begin position="1" status="less than"/>
        <end position="232"/>
    </location>
</feature>
<feature type="DNA-binding region" description="Homeobox" evidence="1">
    <location>
        <begin position="65"/>
        <end position="124"/>
    </location>
</feature>
<feature type="region of interest" description="Disordered" evidence="2">
    <location>
        <begin position="1"/>
        <end position="64"/>
    </location>
</feature>
<feature type="region of interest" description="Disordered" evidence="2">
    <location>
        <begin position="122"/>
        <end position="150"/>
    </location>
</feature>
<feature type="region of interest" description="Disordered" evidence="2">
    <location>
        <begin position="185"/>
        <end position="208"/>
    </location>
</feature>
<feature type="compositionally biased region" description="Low complexity" evidence="2">
    <location>
        <begin position="126"/>
        <end position="142"/>
    </location>
</feature>
<feature type="non-terminal residue">
    <location>
        <position position="1"/>
    </location>
</feature>
<keyword id="KW-0217">Developmental protein</keyword>
<keyword id="KW-0238">DNA-binding</keyword>
<keyword id="KW-0371">Homeobox</keyword>
<keyword id="KW-0539">Nucleus</keyword>
<keyword id="KW-1185">Reference proteome</keyword>
<reference key="1">
    <citation type="journal article" date="1989" name="Gene">
        <title>The chicken homeo box genes CHox1 and CHox3: cloning, sequencing and expression during embryogenesis.</title>
        <authorList>
            <person name="Rangini Z."/>
            <person name="Frumkin A."/>
            <person name="Shani G."/>
            <person name="Guttmann M."/>
            <person name="Eyal-Giladi H."/>
            <person name="Gruenbaum Y."/>
            <person name="Fainsod A."/>
        </authorList>
    </citation>
    <scope>NUCLEOTIDE SEQUENCE [GENOMIC DNA]</scope>
</reference>
<gene>
    <name type="primary">SAX1</name>
    <name type="synonym">CHOX-3</name>
</gene>
<sequence length="232" mass="25223">CLPDPAALSRRCTHPGGERRGGSGRGGAASGRRRVRFVSAVPGPEEPGSPRGGRRRRAEASCAKPRRARTAFTYEQLVALENKFRATRYLSVCERLNLALSLSLTETQVKIWFQNRRTKWKKQHPGADGAAAPAPPAAARCSPSPPRPAALPGQTFPSYAATSALFPAASPFPPGRPRRRTLRSLLGARVPRASTPRTSENPPRLCPSAPGVRNRVFLLRLASTKRKNTYML</sequence>
<accession>P19601</accession>
<organism>
    <name type="scientific">Gallus gallus</name>
    <name type="common">Chicken</name>
    <dbReference type="NCBI Taxonomy" id="9031"/>
    <lineage>
        <taxon>Eukaryota</taxon>
        <taxon>Metazoa</taxon>
        <taxon>Chordata</taxon>
        <taxon>Craniata</taxon>
        <taxon>Vertebrata</taxon>
        <taxon>Euteleostomi</taxon>
        <taxon>Archelosauria</taxon>
        <taxon>Archosauria</taxon>
        <taxon>Dinosauria</taxon>
        <taxon>Saurischia</taxon>
        <taxon>Theropoda</taxon>
        <taxon>Coelurosauria</taxon>
        <taxon>Aves</taxon>
        <taxon>Neognathae</taxon>
        <taxon>Galloanserae</taxon>
        <taxon>Galliformes</taxon>
        <taxon>Phasianidae</taxon>
        <taxon>Phasianinae</taxon>
        <taxon>Gallus</taxon>
    </lineage>
</organism>
<evidence type="ECO:0000255" key="1">
    <source>
        <dbReference type="PROSITE-ProRule" id="PRU00108"/>
    </source>
</evidence>
<evidence type="ECO:0000256" key="2">
    <source>
        <dbReference type="SAM" id="MobiDB-lite"/>
    </source>
</evidence>
<evidence type="ECO:0000305" key="3"/>
<proteinExistence type="evidence at transcript level"/>
<protein>
    <recommendedName>
        <fullName>Homeobox protein SAX-1</fullName>
    </recommendedName>
    <alternativeName>
        <fullName>CHOX-3</fullName>
    </alternativeName>
</protein>